<feature type="chain" id="PRO_1000136196" description="UPF0227 protein YcfP">
    <location>
        <begin position="1"/>
        <end position="180"/>
    </location>
</feature>
<gene>
    <name evidence="1" type="primary">ycfP</name>
    <name type="ordered locus">SEN1839</name>
</gene>
<name>YCFP_SALEP</name>
<proteinExistence type="inferred from homology"/>
<comment type="similarity">
    <text evidence="1">Belongs to the UPF0227 family.</text>
</comment>
<sequence>MIIYLHGFDSNSPGNHEKVLQLQFIDPDVRLVSYSTRHPKHDMQHLLKEVDKMLQLNVDERPLICGVGLGGYWAERIGFLCDIRQVVFNPNLFPYENMEGKIDRPEEYADIATKCVTNFREKNRDRCLVILSRHDEALDSQRSAQALHPYYEIVWDEEQTHKFKNISPHLQRIKAFKTLG</sequence>
<accession>B5QXC6</accession>
<protein>
    <recommendedName>
        <fullName evidence="1">UPF0227 protein YcfP</fullName>
    </recommendedName>
</protein>
<dbReference type="EMBL" id="AM933172">
    <property type="protein sequence ID" value="CAR33419.1"/>
    <property type="molecule type" value="Genomic_DNA"/>
</dbReference>
<dbReference type="RefSeq" id="WP_000587945.1">
    <property type="nucleotide sequence ID" value="NC_011294.1"/>
</dbReference>
<dbReference type="SMR" id="B5QXC6"/>
<dbReference type="ESTHER" id="salty-ycfp">
    <property type="family name" value="abh_upf00227"/>
</dbReference>
<dbReference type="KEGG" id="set:SEN1839"/>
<dbReference type="HOGENOM" id="CLU_128769_0_0_6"/>
<dbReference type="Proteomes" id="UP000000613">
    <property type="component" value="Chromosome"/>
</dbReference>
<dbReference type="FunFam" id="3.40.50.1820:FF:000007">
    <property type="entry name" value="UPF0227 protein YcfP"/>
    <property type="match status" value="1"/>
</dbReference>
<dbReference type="Gene3D" id="3.40.50.1820">
    <property type="entry name" value="alpha/beta hydrolase"/>
    <property type="match status" value="1"/>
</dbReference>
<dbReference type="HAMAP" id="MF_01047">
    <property type="entry name" value="UPF0227"/>
    <property type="match status" value="1"/>
</dbReference>
<dbReference type="InterPro" id="IPR029058">
    <property type="entry name" value="AB_hydrolase_fold"/>
</dbReference>
<dbReference type="InterPro" id="IPR022987">
    <property type="entry name" value="UPF0227"/>
</dbReference>
<dbReference type="InterPro" id="IPR008886">
    <property type="entry name" value="UPF0227/Esterase_YqiA"/>
</dbReference>
<dbReference type="NCBIfam" id="NF003431">
    <property type="entry name" value="PRK04940.1"/>
    <property type="match status" value="1"/>
</dbReference>
<dbReference type="PANTHER" id="PTHR35602">
    <property type="entry name" value="ESTERASE YQIA-RELATED"/>
    <property type="match status" value="1"/>
</dbReference>
<dbReference type="PANTHER" id="PTHR35602:SF2">
    <property type="entry name" value="UPF0227 PROTEIN YCFP"/>
    <property type="match status" value="1"/>
</dbReference>
<dbReference type="Pfam" id="PF05728">
    <property type="entry name" value="UPF0227"/>
    <property type="match status" value="1"/>
</dbReference>
<dbReference type="SUPFAM" id="SSF53474">
    <property type="entry name" value="alpha/beta-Hydrolases"/>
    <property type="match status" value="1"/>
</dbReference>
<evidence type="ECO:0000255" key="1">
    <source>
        <dbReference type="HAMAP-Rule" id="MF_01047"/>
    </source>
</evidence>
<organism>
    <name type="scientific">Salmonella enteritidis PT4 (strain P125109)</name>
    <dbReference type="NCBI Taxonomy" id="550537"/>
    <lineage>
        <taxon>Bacteria</taxon>
        <taxon>Pseudomonadati</taxon>
        <taxon>Pseudomonadota</taxon>
        <taxon>Gammaproteobacteria</taxon>
        <taxon>Enterobacterales</taxon>
        <taxon>Enterobacteriaceae</taxon>
        <taxon>Salmonella</taxon>
    </lineage>
</organism>
<reference key="1">
    <citation type="journal article" date="2008" name="Genome Res.">
        <title>Comparative genome analysis of Salmonella enteritidis PT4 and Salmonella gallinarum 287/91 provides insights into evolutionary and host adaptation pathways.</title>
        <authorList>
            <person name="Thomson N.R."/>
            <person name="Clayton D.J."/>
            <person name="Windhorst D."/>
            <person name="Vernikos G."/>
            <person name="Davidson S."/>
            <person name="Churcher C."/>
            <person name="Quail M.A."/>
            <person name="Stevens M."/>
            <person name="Jones M.A."/>
            <person name="Watson M."/>
            <person name="Barron A."/>
            <person name="Layton A."/>
            <person name="Pickard D."/>
            <person name="Kingsley R.A."/>
            <person name="Bignell A."/>
            <person name="Clark L."/>
            <person name="Harris B."/>
            <person name="Ormond D."/>
            <person name="Abdellah Z."/>
            <person name="Brooks K."/>
            <person name="Cherevach I."/>
            <person name="Chillingworth T."/>
            <person name="Woodward J."/>
            <person name="Norberczak H."/>
            <person name="Lord A."/>
            <person name="Arrowsmith C."/>
            <person name="Jagels K."/>
            <person name="Moule S."/>
            <person name="Mungall K."/>
            <person name="Saunders M."/>
            <person name="Whitehead S."/>
            <person name="Chabalgoity J.A."/>
            <person name="Maskell D."/>
            <person name="Humphreys T."/>
            <person name="Roberts M."/>
            <person name="Barrow P.A."/>
            <person name="Dougan G."/>
            <person name="Parkhill J."/>
        </authorList>
    </citation>
    <scope>NUCLEOTIDE SEQUENCE [LARGE SCALE GENOMIC DNA]</scope>
    <source>
        <strain>P125109</strain>
    </source>
</reference>